<gene>
    <name evidence="2" type="primary">DTX17</name>
    <name evidence="4" type="ordered locus">At1g73700</name>
    <name evidence="5" type="ORF">F25P22.12</name>
</gene>
<feature type="chain" id="PRO_0000434060" description="Protein DETOXIFICATION 17">
    <location>
        <begin position="1"/>
        <end position="476"/>
    </location>
</feature>
<feature type="transmembrane region" description="Helical" evidence="1">
    <location>
        <begin position="29"/>
        <end position="51"/>
    </location>
</feature>
<feature type="transmembrane region" description="Helical" evidence="1">
    <location>
        <begin position="70"/>
        <end position="90"/>
    </location>
</feature>
<feature type="transmembrane region" description="Helical" evidence="1">
    <location>
        <begin position="111"/>
        <end position="131"/>
    </location>
</feature>
<feature type="transmembrane region" description="Helical" evidence="1">
    <location>
        <begin position="140"/>
        <end position="160"/>
    </location>
</feature>
<feature type="transmembrane region" description="Helical" evidence="1">
    <location>
        <begin position="177"/>
        <end position="197"/>
    </location>
</feature>
<feature type="transmembrane region" description="Helical" evidence="1">
    <location>
        <begin position="205"/>
        <end position="225"/>
    </location>
</feature>
<feature type="transmembrane region" description="Helical" evidence="1">
    <location>
        <begin position="252"/>
        <end position="272"/>
    </location>
</feature>
<feature type="transmembrane region" description="Helical" evidence="1">
    <location>
        <begin position="286"/>
        <end position="306"/>
    </location>
</feature>
<feature type="transmembrane region" description="Helical" evidence="1">
    <location>
        <begin position="326"/>
        <end position="346"/>
    </location>
</feature>
<feature type="transmembrane region" description="Helical" evidence="1">
    <location>
        <begin position="363"/>
        <end position="383"/>
    </location>
</feature>
<feature type="transmembrane region" description="Helical" evidence="1">
    <location>
        <begin position="405"/>
        <end position="425"/>
    </location>
</feature>
<feature type="transmembrane region" description="Helical" evidence="1">
    <location>
        <begin position="431"/>
        <end position="451"/>
    </location>
</feature>
<feature type="sequence conflict" description="In Ref. 3; AAM61608." evidence="3" ref="3">
    <original>H</original>
    <variation>Y</variation>
    <location>
        <position position="55"/>
    </location>
</feature>
<feature type="sequence conflict" description="In Ref. 3; AAM61608." evidence="3" ref="3">
    <original>G</original>
    <variation>V</variation>
    <location>
        <position position="395"/>
    </location>
</feature>
<dbReference type="EMBL" id="AC012679">
    <property type="protein sequence ID" value="AAG52084.1"/>
    <property type="molecule type" value="Genomic_DNA"/>
</dbReference>
<dbReference type="EMBL" id="CP002684">
    <property type="protein sequence ID" value="AEE35499.1"/>
    <property type="molecule type" value="Genomic_DNA"/>
</dbReference>
<dbReference type="EMBL" id="AY085051">
    <property type="protein sequence ID" value="AAM61608.1"/>
    <property type="molecule type" value="mRNA"/>
</dbReference>
<dbReference type="PIR" id="B96764">
    <property type="entry name" value="B96764"/>
</dbReference>
<dbReference type="RefSeq" id="NP_177511.1">
    <property type="nucleotide sequence ID" value="NM_106029.2"/>
</dbReference>
<dbReference type="SMR" id="Q9C9U1"/>
<dbReference type="FunCoup" id="Q9C9U1">
    <property type="interactions" value="282"/>
</dbReference>
<dbReference type="STRING" id="3702.Q9C9U1"/>
<dbReference type="iPTMnet" id="Q9C9U1"/>
<dbReference type="PaxDb" id="3702-AT1G73700.1"/>
<dbReference type="EnsemblPlants" id="AT1G73700.1">
    <property type="protein sequence ID" value="AT1G73700.1"/>
    <property type="gene ID" value="AT1G73700"/>
</dbReference>
<dbReference type="GeneID" id="843705"/>
<dbReference type="Gramene" id="AT1G73700.1">
    <property type="protein sequence ID" value="AT1G73700.1"/>
    <property type="gene ID" value="AT1G73700"/>
</dbReference>
<dbReference type="KEGG" id="ath:AT1G73700"/>
<dbReference type="Araport" id="AT1G73700"/>
<dbReference type="TAIR" id="AT1G73700"/>
<dbReference type="eggNOG" id="KOG1347">
    <property type="taxonomic scope" value="Eukaryota"/>
</dbReference>
<dbReference type="HOGENOM" id="CLU_012893_1_0_1"/>
<dbReference type="InParanoid" id="Q9C9U1"/>
<dbReference type="OMA" id="IWANTEQ"/>
<dbReference type="OrthoDB" id="2126698at2759"/>
<dbReference type="PhylomeDB" id="Q9C9U1"/>
<dbReference type="PRO" id="PR:Q9C9U1"/>
<dbReference type="Proteomes" id="UP000006548">
    <property type="component" value="Chromosome 1"/>
</dbReference>
<dbReference type="ExpressionAtlas" id="Q9C9U1">
    <property type="expression patterns" value="baseline and differential"/>
</dbReference>
<dbReference type="GO" id="GO:0016020">
    <property type="term" value="C:membrane"/>
    <property type="evidence" value="ECO:0007669"/>
    <property type="project" value="UniProtKB-SubCell"/>
</dbReference>
<dbReference type="GO" id="GO:0015297">
    <property type="term" value="F:antiporter activity"/>
    <property type="evidence" value="ECO:0007669"/>
    <property type="project" value="InterPro"/>
</dbReference>
<dbReference type="GO" id="GO:0042910">
    <property type="term" value="F:xenobiotic transmembrane transporter activity"/>
    <property type="evidence" value="ECO:0007669"/>
    <property type="project" value="InterPro"/>
</dbReference>
<dbReference type="GO" id="GO:1990961">
    <property type="term" value="P:xenobiotic detoxification by transmembrane export across the plasma membrane"/>
    <property type="evidence" value="ECO:0007669"/>
    <property type="project" value="InterPro"/>
</dbReference>
<dbReference type="CDD" id="cd13132">
    <property type="entry name" value="MATE_eukaryotic"/>
    <property type="match status" value="1"/>
</dbReference>
<dbReference type="InterPro" id="IPR045069">
    <property type="entry name" value="MATE_euk"/>
</dbReference>
<dbReference type="InterPro" id="IPR002528">
    <property type="entry name" value="MATE_fam"/>
</dbReference>
<dbReference type="NCBIfam" id="TIGR00797">
    <property type="entry name" value="matE"/>
    <property type="match status" value="1"/>
</dbReference>
<dbReference type="PANTHER" id="PTHR11206">
    <property type="entry name" value="MULTIDRUG RESISTANCE PROTEIN"/>
    <property type="match status" value="1"/>
</dbReference>
<dbReference type="Pfam" id="PF01554">
    <property type="entry name" value="MatE"/>
    <property type="match status" value="2"/>
</dbReference>
<organism>
    <name type="scientific">Arabidopsis thaliana</name>
    <name type="common">Mouse-ear cress</name>
    <dbReference type="NCBI Taxonomy" id="3702"/>
    <lineage>
        <taxon>Eukaryota</taxon>
        <taxon>Viridiplantae</taxon>
        <taxon>Streptophyta</taxon>
        <taxon>Embryophyta</taxon>
        <taxon>Tracheophyta</taxon>
        <taxon>Spermatophyta</taxon>
        <taxon>Magnoliopsida</taxon>
        <taxon>eudicotyledons</taxon>
        <taxon>Gunneridae</taxon>
        <taxon>Pentapetalae</taxon>
        <taxon>rosids</taxon>
        <taxon>malvids</taxon>
        <taxon>Brassicales</taxon>
        <taxon>Brassicaceae</taxon>
        <taxon>Camelineae</taxon>
        <taxon>Arabidopsis</taxon>
    </lineage>
</organism>
<protein>
    <recommendedName>
        <fullName evidence="2">Protein DETOXIFICATION 17</fullName>
        <shortName evidence="2">AtDTX17</shortName>
    </recommendedName>
    <alternativeName>
        <fullName evidence="3">Multidrug and toxic compound extrusion protein 17</fullName>
        <shortName evidence="3">MATE protein 17</shortName>
    </alternativeName>
</protein>
<name>DTX17_ARATH</name>
<reference key="1">
    <citation type="journal article" date="2000" name="Nature">
        <title>Sequence and analysis of chromosome 1 of the plant Arabidopsis thaliana.</title>
        <authorList>
            <person name="Theologis A."/>
            <person name="Ecker J.R."/>
            <person name="Palm C.J."/>
            <person name="Federspiel N.A."/>
            <person name="Kaul S."/>
            <person name="White O."/>
            <person name="Alonso J."/>
            <person name="Altafi H."/>
            <person name="Araujo R."/>
            <person name="Bowman C.L."/>
            <person name="Brooks S.Y."/>
            <person name="Buehler E."/>
            <person name="Chan A."/>
            <person name="Chao Q."/>
            <person name="Chen H."/>
            <person name="Cheuk R.F."/>
            <person name="Chin C.W."/>
            <person name="Chung M.K."/>
            <person name="Conn L."/>
            <person name="Conway A.B."/>
            <person name="Conway A.R."/>
            <person name="Creasy T.H."/>
            <person name="Dewar K."/>
            <person name="Dunn P."/>
            <person name="Etgu P."/>
            <person name="Feldblyum T.V."/>
            <person name="Feng J.-D."/>
            <person name="Fong B."/>
            <person name="Fujii C.Y."/>
            <person name="Gill J.E."/>
            <person name="Goldsmith A.D."/>
            <person name="Haas B."/>
            <person name="Hansen N.F."/>
            <person name="Hughes B."/>
            <person name="Huizar L."/>
            <person name="Hunter J.L."/>
            <person name="Jenkins J."/>
            <person name="Johnson-Hopson C."/>
            <person name="Khan S."/>
            <person name="Khaykin E."/>
            <person name="Kim C.J."/>
            <person name="Koo H.L."/>
            <person name="Kremenetskaia I."/>
            <person name="Kurtz D.B."/>
            <person name="Kwan A."/>
            <person name="Lam B."/>
            <person name="Langin-Hooper S."/>
            <person name="Lee A."/>
            <person name="Lee J.M."/>
            <person name="Lenz C.A."/>
            <person name="Li J.H."/>
            <person name="Li Y.-P."/>
            <person name="Lin X."/>
            <person name="Liu S.X."/>
            <person name="Liu Z.A."/>
            <person name="Luros J.S."/>
            <person name="Maiti R."/>
            <person name="Marziali A."/>
            <person name="Militscher J."/>
            <person name="Miranda M."/>
            <person name="Nguyen M."/>
            <person name="Nierman W.C."/>
            <person name="Osborne B.I."/>
            <person name="Pai G."/>
            <person name="Peterson J."/>
            <person name="Pham P.K."/>
            <person name="Rizzo M."/>
            <person name="Rooney T."/>
            <person name="Rowley D."/>
            <person name="Sakano H."/>
            <person name="Salzberg S.L."/>
            <person name="Schwartz J.R."/>
            <person name="Shinn P."/>
            <person name="Southwick A.M."/>
            <person name="Sun H."/>
            <person name="Tallon L.J."/>
            <person name="Tambunga G."/>
            <person name="Toriumi M.J."/>
            <person name="Town C.D."/>
            <person name="Utterback T."/>
            <person name="Van Aken S."/>
            <person name="Vaysberg M."/>
            <person name="Vysotskaia V.S."/>
            <person name="Walker M."/>
            <person name="Wu D."/>
            <person name="Yu G."/>
            <person name="Fraser C.M."/>
            <person name="Venter J.C."/>
            <person name="Davis R.W."/>
        </authorList>
    </citation>
    <scope>NUCLEOTIDE SEQUENCE [LARGE SCALE GENOMIC DNA]</scope>
    <source>
        <strain>cv. Columbia</strain>
    </source>
</reference>
<reference key="2">
    <citation type="journal article" date="2017" name="Plant J.">
        <title>Araport11: a complete reannotation of the Arabidopsis thaliana reference genome.</title>
        <authorList>
            <person name="Cheng C.Y."/>
            <person name="Krishnakumar V."/>
            <person name="Chan A.P."/>
            <person name="Thibaud-Nissen F."/>
            <person name="Schobel S."/>
            <person name="Town C.D."/>
        </authorList>
    </citation>
    <scope>GENOME REANNOTATION</scope>
    <source>
        <strain>cv. Columbia</strain>
    </source>
</reference>
<reference key="3">
    <citation type="submission" date="2002-03" db="EMBL/GenBank/DDBJ databases">
        <title>Full-length cDNA from Arabidopsis thaliana.</title>
        <authorList>
            <person name="Brover V.V."/>
            <person name="Troukhan M.E."/>
            <person name="Alexandrov N.A."/>
            <person name="Lu Y.-P."/>
            <person name="Flavell R.B."/>
            <person name="Feldmann K.A."/>
        </authorList>
    </citation>
    <scope>NUCLEOTIDE SEQUENCE [LARGE SCALE MRNA]</scope>
</reference>
<reference key="4">
    <citation type="journal article" date="2002" name="J. Biol. Chem.">
        <title>Functional cloning and characterization of a plant efflux carrier for multidrug and heavy metal detoxification.</title>
        <authorList>
            <person name="Li L."/>
            <person name="He Z."/>
            <person name="Pandey G.K."/>
            <person name="Tsuchiya T."/>
            <person name="Luan S."/>
        </authorList>
    </citation>
    <scope>GENE FAMILY</scope>
    <scope>NOMENCLATURE</scope>
</reference>
<reference key="5">
    <citation type="journal article" date="2003" name="Eur. J. Biochem.">
        <title>The multidrug/oligosaccharidyl-lipid/polysaccharide (MOP) exporter superfamily.</title>
        <authorList>
            <person name="Hvorup R.N."/>
            <person name="Winnen B."/>
            <person name="Chang A.B."/>
            <person name="Jiang Y."/>
            <person name="Zhou X.F."/>
            <person name="Saier M.H. Jr."/>
        </authorList>
    </citation>
    <scope>GENE FAMILY</scope>
</reference>
<accession>Q9C9U1</accession>
<accession>Q8LF49</accession>
<keyword id="KW-0472">Membrane</keyword>
<keyword id="KW-1185">Reference proteome</keyword>
<keyword id="KW-0812">Transmembrane</keyword>
<keyword id="KW-1133">Transmembrane helix</keyword>
<keyword id="KW-0813">Transport</keyword>
<comment type="subcellular location">
    <subcellularLocation>
        <location evidence="1">Membrane</location>
        <topology evidence="1">Multi-pass membrane protein</topology>
    </subcellularLocation>
</comment>
<comment type="similarity">
    <text evidence="3">Belongs to the multi antimicrobial extrusion (MATE) (TC 2.A.66.1) family.</text>
</comment>
<evidence type="ECO:0000255" key="1"/>
<evidence type="ECO:0000303" key="2">
    <source>
    </source>
</evidence>
<evidence type="ECO:0000305" key="3"/>
<evidence type="ECO:0000312" key="4">
    <source>
        <dbReference type="Araport" id="AT1G73700"/>
    </source>
</evidence>
<evidence type="ECO:0000312" key="5">
    <source>
        <dbReference type="EMBL" id="AAG52084.1"/>
    </source>
</evidence>
<sequence length="476" mass="51054">MEDGVTPPLLITEKDTTMIRVKEEVKKQLWLSAPLIGVSLLQYSLQVISVMFVGHLGSLPLSAASIATSFASVTGFTFLLGTASALETLCGQAYGAKLYGKLGIQMQRAMFVLLILSVPLSIIWANTEQILVLVHQDKSIASVAGSYAKYMIPSLFAYGLLQCINRFLQAQNNVFPVFVCSGITTCLHLLLCWLFVLKTGLGYRGAALAISVSYWFNVILLSCYVKFSPSCSHSWTGFSKEAFQELYDFSKIAFPSAVMVCLELWSFELLVLASGLLPNPVLETSVLSICLNTSLTIWQISVGLGGAASIRVSNELGAGNPQVAKLAVYVIVGIAVAEGIVVVTVLLSIRKILGHAFSSDPKIIAYAASMIPIVACGNFLDGLQCVLSGVARGCGWQKIGACVNLGSYYLVGVPLGLLLGFHFHIGGRGLWLGIVTALSVQVLCLSLVTIFTNWDKEAKKATNRVGSSDDKDGDVQ</sequence>
<proteinExistence type="evidence at transcript level"/>